<accession>P19356</accession>
<accession>O08568</accession>
<comment type="function">
    <text evidence="6">As part of the heme biosynthetic pathway, catalyzes the sequential polymerization of four molecules of porphobilinogen to form hydroxymethylbilane, also known as preuroporphyrinogen. Catalysis begins with the assembly of the dipyrromethane cofactor by the apoenzyme from two molecules of porphobilinogen or from preuroporphyrinogen. The covalently linked cofactor acts as a primer, around which the tetrapyrrole product is assembled. In the last step of catalysis, the product, preuroporphyrinogen, is released, leaving the cofactor bound to the holodeaminase intact.</text>
</comment>
<comment type="catalytic activity">
    <reaction evidence="3">
        <text>4 porphobilinogen + H2O = hydroxymethylbilane + 4 NH4(+)</text>
        <dbReference type="Rhea" id="RHEA:13185"/>
        <dbReference type="ChEBI" id="CHEBI:15377"/>
        <dbReference type="ChEBI" id="CHEBI:28938"/>
        <dbReference type="ChEBI" id="CHEBI:57845"/>
        <dbReference type="ChEBI" id="CHEBI:58126"/>
        <dbReference type="EC" id="2.5.1.61"/>
    </reaction>
    <physiologicalReaction direction="left-to-right" evidence="6">
        <dbReference type="Rhea" id="RHEA:13186"/>
    </physiologicalReaction>
</comment>
<comment type="cofactor">
    <cofactor evidence="1">
        <name>dipyrromethane</name>
        <dbReference type="ChEBI" id="CHEBI:60342"/>
    </cofactor>
    <text evidence="1">Binds 1 dipyrromethane group covalently.</text>
</comment>
<comment type="biophysicochemical properties">
    <kinetics>
        <KM evidence="3">1.1 uM for porphobilinogen (at pH 8.0 and 37 degrees Celsius)</KM>
        <Vmax evidence="3">170.0 pmol/min/mg enzyme (at pH 8.0 and 37 degrees Celsius)</Vmax>
    </kinetics>
    <phDependence>
        <text evidence="3">Optimum pH is 8.0-8.2.</text>
    </phDependence>
</comment>
<comment type="pathway">
    <text evidence="6">Porphyrin-containing compound metabolism; protoporphyrin-IX biosynthesis; coproporphyrinogen-III from 5-aminolevulinate: step 2/4.</text>
</comment>
<comment type="subunit">
    <text evidence="3">Monomer.</text>
</comment>
<comment type="subcellular location">
    <subcellularLocation>
        <location evidence="2">Cytoplasm</location>
        <location evidence="2">Cytosol</location>
    </subcellularLocation>
</comment>
<comment type="alternative products">
    <event type="alternative splicing"/>
    <isoform>
        <id>P19356-1</id>
        <name>1</name>
        <name>Non-erythropoietic</name>
        <sequence type="displayed"/>
    </isoform>
    <isoform>
        <id>P19356-2</id>
        <name>2</name>
        <name>Erythrocyte</name>
        <sequence type="described" ref="VSP_002069"/>
    </isoform>
</comment>
<comment type="similarity">
    <text evidence="5">Belongs to the HMBS family.</text>
</comment>
<keyword id="KW-0007">Acetylation</keyword>
<keyword id="KW-0025">Alternative splicing</keyword>
<keyword id="KW-0963">Cytoplasm</keyword>
<keyword id="KW-0350">Heme biosynthesis</keyword>
<keyword id="KW-0597">Phosphoprotein</keyword>
<keyword id="KW-0627">Porphyrin biosynthesis</keyword>
<keyword id="KW-1185">Reference proteome</keyword>
<keyword id="KW-0808">Transferase</keyword>
<reference key="1">
    <citation type="journal article" date="1988" name="Nucleic Acids Res.">
        <title>Rat porphobilinogen deaminase cDNA: nucleotide sequence of the erythropoietic form.</title>
        <authorList>
            <person name="Stubnicer A.C."/>
            <person name="Picat C."/>
            <person name="Grandchamp B."/>
        </authorList>
    </citation>
    <scope>NUCLEOTIDE SEQUENCE [MRNA] (ISOFORM 2)</scope>
</reference>
<reference key="2">
    <citation type="journal article" date="1997" name="Arch. Biochem. Biophys.">
        <title>Rat harderian gland porphobilinogen deaminase: characterization studies and regulatory action of protoporphyrin IX.</title>
        <authorList>
            <person name="Cardalda C.A."/>
            <person name="Juknat A.A."/>
            <person name="Princ F.G."/>
            <person name="Batlle A."/>
        </authorList>
    </citation>
    <scope>NUCLEOTIDE SEQUENCE [MRNA] (ISOFORM 1)</scope>
    <scope>FUNCTION</scope>
    <scope>CATALYTIC ACTIVITY</scope>
    <scope>BIOPHYSICOCHEMICAL PROPERTIES</scope>
    <scope>PATHWAY</scope>
    <scope>SUBUNIT</scope>
    <source>
        <strain>CHBB THOM</strain>
    </source>
</reference>
<reference key="3">
    <citation type="journal article" date="1998" name="Biochem. Biophys. Res. Commun.">
        <title>Sequence and structure of the rat housekeeping PBG-D isoform.</title>
        <authorList>
            <person name="Cardalda C.A."/>
            <person name="Batlle A."/>
            <person name="Juknat A.A."/>
        </authorList>
    </citation>
    <scope>NUCLEOTIDE SEQUENCE [MRNA] (ISOFORM 1)</scope>
</reference>
<gene>
    <name type="primary">Hmbs</name>
</gene>
<organism>
    <name type="scientific">Rattus norvegicus</name>
    <name type="common">Rat</name>
    <dbReference type="NCBI Taxonomy" id="10116"/>
    <lineage>
        <taxon>Eukaryota</taxon>
        <taxon>Metazoa</taxon>
        <taxon>Chordata</taxon>
        <taxon>Craniata</taxon>
        <taxon>Vertebrata</taxon>
        <taxon>Euteleostomi</taxon>
        <taxon>Mammalia</taxon>
        <taxon>Eutheria</taxon>
        <taxon>Euarchontoglires</taxon>
        <taxon>Glires</taxon>
        <taxon>Rodentia</taxon>
        <taxon>Myomorpha</taxon>
        <taxon>Muroidea</taxon>
        <taxon>Muridae</taxon>
        <taxon>Murinae</taxon>
        <taxon>Rattus</taxon>
    </lineage>
</organism>
<evidence type="ECO:0000250" key="1">
    <source>
        <dbReference type="UniProtKB" id="P08397"/>
    </source>
</evidence>
<evidence type="ECO:0000250" key="2">
    <source>
        <dbReference type="UniProtKB" id="P22907"/>
    </source>
</evidence>
<evidence type="ECO:0000269" key="3">
    <source>
    </source>
</evidence>
<evidence type="ECO:0000303" key="4">
    <source>
    </source>
</evidence>
<evidence type="ECO:0000305" key="5"/>
<evidence type="ECO:0000305" key="6">
    <source>
    </source>
</evidence>
<dbReference type="EC" id="2.5.1.61" evidence="3"/>
<dbReference type="EMBL" id="X06827">
    <property type="protein sequence ID" value="CAA29984.1"/>
    <property type="molecule type" value="mRNA"/>
</dbReference>
<dbReference type="EMBL" id="Y12006">
    <property type="protein sequence ID" value="CAA72734.1"/>
    <property type="molecule type" value="mRNA"/>
</dbReference>
<dbReference type="PIR" id="JE0285">
    <property type="entry name" value="IBRTE"/>
</dbReference>
<dbReference type="SMR" id="P19356"/>
<dbReference type="FunCoup" id="P19356">
    <property type="interactions" value="1168"/>
</dbReference>
<dbReference type="STRING" id="10116.ENSRNOP00000014128"/>
<dbReference type="iPTMnet" id="P19356"/>
<dbReference type="PhosphoSitePlus" id="P19356"/>
<dbReference type="SwissPalm" id="P19356"/>
<dbReference type="jPOST" id="P19356"/>
<dbReference type="PaxDb" id="10116-ENSRNOP00000014128"/>
<dbReference type="UCSC" id="RGD:2801">
    <molecule id="P19356-1"/>
    <property type="organism name" value="rat"/>
</dbReference>
<dbReference type="AGR" id="RGD:2801"/>
<dbReference type="RGD" id="2801">
    <property type="gene designation" value="Hmbs"/>
</dbReference>
<dbReference type="eggNOG" id="KOG2892">
    <property type="taxonomic scope" value="Eukaryota"/>
</dbReference>
<dbReference type="InParanoid" id="P19356"/>
<dbReference type="PhylomeDB" id="P19356"/>
<dbReference type="BRENDA" id="2.5.1.61">
    <property type="organism ID" value="5301"/>
</dbReference>
<dbReference type="Reactome" id="R-RNO-189451">
    <property type="pathway name" value="Heme biosynthesis"/>
</dbReference>
<dbReference type="SABIO-RK" id="P19356"/>
<dbReference type="UniPathway" id="UPA00251">
    <property type="reaction ID" value="UER00319"/>
</dbReference>
<dbReference type="PRO" id="PR:P19356"/>
<dbReference type="Proteomes" id="UP000002494">
    <property type="component" value="Unplaced"/>
</dbReference>
<dbReference type="GO" id="GO:0030424">
    <property type="term" value="C:axon"/>
    <property type="evidence" value="ECO:0000314"/>
    <property type="project" value="RGD"/>
</dbReference>
<dbReference type="GO" id="GO:0000793">
    <property type="term" value="C:condensed chromosome"/>
    <property type="evidence" value="ECO:0000314"/>
    <property type="project" value="RGD"/>
</dbReference>
<dbReference type="GO" id="GO:0005737">
    <property type="term" value="C:cytoplasm"/>
    <property type="evidence" value="ECO:0000318"/>
    <property type="project" value="GO_Central"/>
</dbReference>
<dbReference type="GO" id="GO:0005829">
    <property type="term" value="C:cytosol"/>
    <property type="evidence" value="ECO:0000266"/>
    <property type="project" value="RGD"/>
</dbReference>
<dbReference type="GO" id="GO:0048471">
    <property type="term" value="C:perinuclear region of cytoplasm"/>
    <property type="evidence" value="ECO:0000314"/>
    <property type="project" value="RGD"/>
</dbReference>
<dbReference type="GO" id="GO:0043176">
    <property type="term" value="F:amine binding"/>
    <property type="evidence" value="ECO:0000353"/>
    <property type="project" value="RGD"/>
</dbReference>
<dbReference type="GO" id="GO:0031406">
    <property type="term" value="F:carboxylic acid binding"/>
    <property type="evidence" value="ECO:0000353"/>
    <property type="project" value="RGD"/>
</dbReference>
<dbReference type="GO" id="GO:0004418">
    <property type="term" value="F:hydroxymethylbilane synthase activity"/>
    <property type="evidence" value="ECO:0000314"/>
    <property type="project" value="RGD"/>
</dbReference>
<dbReference type="GO" id="GO:0004852">
    <property type="term" value="F:uroporphyrinogen-III synthase activity"/>
    <property type="evidence" value="ECO:0000314"/>
    <property type="project" value="RGD"/>
</dbReference>
<dbReference type="GO" id="GO:0031100">
    <property type="term" value="P:animal organ regeneration"/>
    <property type="evidence" value="ECO:0000270"/>
    <property type="project" value="RGD"/>
</dbReference>
<dbReference type="GO" id="GO:0048708">
    <property type="term" value="P:astrocyte differentiation"/>
    <property type="evidence" value="ECO:0000270"/>
    <property type="project" value="RGD"/>
</dbReference>
<dbReference type="GO" id="GO:0071418">
    <property type="term" value="P:cellular response to amine stimulus"/>
    <property type="evidence" value="ECO:0000270"/>
    <property type="project" value="RGD"/>
</dbReference>
<dbReference type="GO" id="GO:0071236">
    <property type="term" value="P:cellular response to antibiotic"/>
    <property type="evidence" value="ECO:0000270"/>
    <property type="project" value="RGD"/>
</dbReference>
<dbReference type="GO" id="GO:0071243">
    <property type="term" value="P:cellular response to arsenic-containing substance"/>
    <property type="evidence" value="ECO:0000270"/>
    <property type="project" value="RGD"/>
</dbReference>
<dbReference type="GO" id="GO:0071345">
    <property type="term" value="P:cellular response to cytokine stimulus"/>
    <property type="evidence" value="ECO:0000270"/>
    <property type="project" value="RGD"/>
</dbReference>
<dbReference type="GO" id="GO:0071549">
    <property type="term" value="P:cellular response to dexamethasone stimulus"/>
    <property type="evidence" value="ECO:0000270"/>
    <property type="project" value="RGD"/>
</dbReference>
<dbReference type="GO" id="GO:0071284">
    <property type="term" value="P:cellular response to lead ion"/>
    <property type="evidence" value="ECO:0000270"/>
    <property type="project" value="RGD"/>
</dbReference>
<dbReference type="GO" id="GO:0006784">
    <property type="term" value="P:heme A biosynthetic process"/>
    <property type="evidence" value="ECO:0000266"/>
    <property type="project" value="RGD"/>
</dbReference>
<dbReference type="GO" id="GO:0006785">
    <property type="term" value="P:heme B biosynthetic process"/>
    <property type="evidence" value="ECO:0000266"/>
    <property type="project" value="RGD"/>
</dbReference>
<dbReference type="GO" id="GO:0006783">
    <property type="term" value="P:heme biosynthetic process"/>
    <property type="evidence" value="ECO:0000266"/>
    <property type="project" value="RGD"/>
</dbReference>
<dbReference type="GO" id="GO:0048034">
    <property type="term" value="P:heme O biosynthetic process"/>
    <property type="evidence" value="ECO:0000266"/>
    <property type="project" value="RGD"/>
</dbReference>
<dbReference type="GO" id="GO:0001889">
    <property type="term" value="P:liver development"/>
    <property type="evidence" value="ECO:0000314"/>
    <property type="project" value="RGD"/>
</dbReference>
<dbReference type="GO" id="GO:0006779">
    <property type="term" value="P:porphyrin-containing compound biosynthetic process"/>
    <property type="evidence" value="ECO:0000314"/>
    <property type="project" value="RGD"/>
</dbReference>
<dbReference type="GO" id="GO:0006778">
    <property type="term" value="P:porphyrin-containing compound metabolic process"/>
    <property type="evidence" value="ECO:0000314"/>
    <property type="project" value="RGD"/>
</dbReference>
<dbReference type="GO" id="GO:0006782">
    <property type="term" value="P:protoporphyrinogen IX biosynthetic process"/>
    <property type="evidence" value="ECO:0007669"/>
    <property type="project" value="UniProtKB-UniPathway"/>
</dbReference>
<dbReference type="GO" id="GO:0043200">
    <property type="term" value="P:response to amino acid"/>
    <property type="evidence" value="ECO:0000270"/>
    <property type="project" value="RGD"/>
</dbReference>
<dbReference type="GO" id="GO:0009743">
    <property type="term" value="P:response to carbohydrate"/>
    <property type="evidence" value="ECO:0000270"/>
    <property type="project" value="RGD"/>
</dbReference>
<dbReference type="GO" id="GO:0032025">
    <property type="term" value="P:response to cobalt ion"/>
    <property type="evidence" value="ECO:0000270"/>
    <property type="project" value="RGD"/>
</dbReference>
<dbReference type="GO" id="GO:0032355">
    <property type="term" value="P:response to estradiol"/>
    <property type="evidence" value="ECO:0000270"/>
    <property type="project" value="RGD"/>
</dbReference>
<dbReference type="GO" id="GO:0009725">
    <property type="term" value="P:response to hormone"/>
    <property type="evidence" value="ECO:0000270"/>
    <property type="project" value="RGD"/>
</dbReference>
<dbReference type="GO" id="GO:0001666">
    <property type="term" value="P:response to hypoxia"/>
    <property type="evidence" value="ECO:0000270"/>
    <property type="project" value="RGD"/>
</dbReference>
<dbReference type="GO" id="GO:0010288">
    <property type="term" value="P:response to lead ion"/>
    <property type="evidence" value="ECO:0000270"/>
    <property type="project" value="RGD"/>
</dbReference>
<dbReference type="GO" id="GO:0010038">
    <property type="term" value="P:response to metal ion"/>
    <property type="evidence" value="ECO:0000270"/>
    <property type="project" value="RGD"/>
</dbReference>
<dbReference type="GO" id="GO:0051597">
    <property type="term" value="P:response to methylmercury"/>
    <property type="evidence" value="ECO:0000270"/>
    <property type="project" value="RGD"/>
</dbReference>
<dbReference type="GO" id="GO:0031667">
    <property type="term" value="P:response to nutrient levels"/>
    <property type="evidence" value="ECO:0000270"/>
    <property type="project" value="RGD"/>
</dbReference>
<dbReference type="GO" id="GO:0033273">
    <property type="term" value="P:response to vitamin"/>
    <property type="evidence" value="ECO:0000270"/>
    <property type="project" value="RGD"/>
</dbReference>
<dbReference type="GO" id="GO:0009410">
    <property type="term" value="P:response to xenobiotic stimulus"/>
    <property type="evidence" value="ECO:0000314"/>
    <property type="project" value="RGD"/>
</dbReference>
<dbReference type="GO" id="GO:0010043">
    <property type="term" value="P:response to zinc ion"/>
    <property type="evidence" value="ECO:0000270"/>
    <property type="project" value="RGD"/>
</dbReference>
<dbReference type="GO" id="GO:0033014">
    <property type="term" value="P:tetrapyrrole biosynthetic process"/>
    <property type="evidence" value="ECO:0000314"/>
    <property type="project" value="RGD"/>
</dbReference>
<dbReference type="CDD" id="cd13645">
    <property type="entry name" value="PBP2_HuPBGD_like"/>
    <property type="match status" value="1"/>
</dbReference>
<dbReference type="FunFam" id="3.40.190.10:FF:000005">
    <property type="entry name" value="Porphobilinogen deaminase"/>
    <property type="match status" value="1"/>
</dbReference>
<dbReference type="FunFam" id="3.40.190.10:FF:000260">
    <property type="entry name" value="Porphobilinogen deaminase"/>
    <property type="match status" value="1"/>
</dbReference>
<dbReference type="FunFam" id="3.30.160.40:FF:000003">
    <property type="entry name" value="porphobilinogen deaminase isoform X1"/>
    <property type="match status" value="1"/>
</dbReference>
<dbReference type="Gene3D" id="3.40.190.10">
    <property type="entry name" value="Periplasmic binding protein-like II"/>
    <property type="match status" value="2"/>
</dbReference>
<dbReference type="Gene3D" id="3.30.160.40">
    <property type="entry name" value="Porphobilinogen deaminase, C-terminal domain"/>
    <property type="match status" value="1"/>
</dbReference>
<dbReference type="HAMAP" id="MF_00260">
    <property type="entry name" value="Porphobil_deam"/>
    <property type="match status" value="1"/>
</dbReference>
<dbReference type="InterPro" id="IPR000860">
    <property type="entry name" value="HemC"/>
</dbReference>
<dbReference type="InterPro" id="IPR022419">
    <property type="entry name" value="Porphobilin_deaminase_cofac_BS"/>
</dbReference>
<dbReference type="InterPro" id="IPR022417">
    <property type="entry name" value="Porphobilin_deaminase_N"/>
</dbReference>
<dbReference type="InterPro" id="IPR022418">
    <property type="entry name" value="Porphobilinogen_deaminase_C"/>
</dbReference>
<dbReference type="InterPro" id="IPR036803">
    <property type="entry name" value="Porphobilinogen_deaminase_C_sf"/>
</dbReference>
<dbReference type="NCBIfam" id="TIGR00212">
    <property type="entry name" value="hemC"/>
    <property type="match status" value="1"/>
</dbReference>
<dbReference type="PANTHER" id="PTHR11557">
    <property type="entry name" value="PORPHOBILINOGEN DEAMINASE"/>
    <property type="match status" value="1"/>
</dbReference>
<dbReference type="PANTHER" id="PTHR11557:SF0">
    <property type="entry name" value="PORPHOBILINOGEN DEAMINASE"/>
    <property type="match status" value="1"/>
</dbReference>
<dbReference type="Pfam" id="PF01379">
    <property type="entry name" value="Porphobil_deam"/>
    <property type="match status" value="1"/>
</dbReference>
<dbReference type="Pfam" id="PF03900">
    <property type="entry name" value="Porphobil_deamC"/>
    <property type="match status" value="1"/>
</dbReference>
<dbReference type="PIRSF" id="PIRSF001438">
    <property type="entry name" value="4pyrrol_synth_OHMeBilane_synth"/>
    <property type="match status" value="1"/>
</dbReference>
<dbReference type="PRINTS" id="PR00151">
    <property type="entry name" value="PORPHBDMNASE"/>
</dbReference>
<dbReference type="SUPFAM" id="SSF53850">
    <property type="entry name" value="Periplasmic binding protein-like II"/>
    <property type="match status" value="1"/>
</dbReference>
<dbReference type="SUPFAM" id="SSF54782">
    <property type="entry name" value="Porphobilinogen deaminase (hydroxymethylbilane synthase), C-terminal domain"/>
    <property type="match status" value="1"/>
</dbReference>
<dbReference type="PROSITE" id="PS00533">
    <property type="entry name" value="PORPHOBILINOGEN_DEAM"/>
    <property type="match status" value="1"/>
</dbReference>
<sequence>MSGNGGAATTAEENGSMMRVIRVGTRKSQLARIQTDTVVAMLKTLYPGIQFEIIAMSTTGDKILDTALSKIGEKSLFTKELENALEKNEVDLVVHSLKDVPTILPPGFTIGAICKRENPCDAVVFHPKFIGKTLETLPEKSAVGTSSLRRVAQLQRKFPHLEFKSIRGNLNTRLRKLDEQLEFSAIILAVAGLQRMGWQNRVGQILHPEECMYAVGQGALAVEVRAKDQDILDLVGVLHDPETLLRCIAERAFLRHLEGGCSVPVAVHTVMKDGQLYLTGGVWSLDGSDSMQETMQATIQVPVQQEDGPEDDPQLVGITARNIPRGAQLAAENLGISLASLLLNKGAKNILDVARQLNDVR</sequence>
<proteinExistence type="evidence at protein level"/>
<feature type="initiator methionine" description="Removed" evidence="1">
    <location>
        <position position="1"/>
    </location>
</feature>
<feature type="chain" id="PRO_0000143036" description="Porphobilinogen deaminase">
    <location>
        <begin position="2"/>
        <end position="361"/>
    </location>
</feature>
<feature type="modified residue" description="N-acetylserine" evidence="1">
    <location>
        <position position="2"/>
    </location>
</feature>
<feature type="modified residue" description="Phosphoserine" evidence="1">
    <location>
        <position position="69"/>
    </location>
</feature>
<feature type="modified residue" description="N6-acetyllysine" evidence="2">
    <location>
        <position position="74"/>
    </location>
</feature>
<feature type="modified residue" description="Phosphoserine" evidence="1">
    <location>
        <position position="147"/>
    </location>
</feature>
<feature type="modified residue" description="S-(dipyrrolylmethanemethyl)cysteine" evidence="1">
    <location>
        <position position="261"/>
    </location>
</feature>
<feature type="splice variant" id="VSP_002069" description="In isoform 2." evidence="4">
    <location>
        <begin position="1"/>
        <end position="17"/>
    </location>
</feature>
<feature type="sequence conflict" description="In Ref. 1; CAA29984." evidence="5" ref="1">
    <original>HP</original>
    <variation>EG</variation>
    <location>
        <begin position="126"/>
        <end position="127"/>
    </location>
</feature>
<feature type="sequence conflict" description="In Ref. 1; CAA29984." evidence="5" ref="1">
    <original>A</original>
    <variation>D</variation>
    <location>
        <position position="252"/>
    </location>
</feature>
<name>HEM3_RAT</name>
<protein>
    <recommendedName>
        <fullName evidence="6">Porphobilinogen deaminase</fullName>
        <shortName>PBG-D</shortName>
        <ecNumber evidence="3">2.5.1.61</ecNumber>
    </recommendedName>
    <alternativeName>
        <fullName>Hydroxymethylbilane synthase</fullName>
        <shortName>HMBS</shortName>
    </alternativeName>
    <alternativeName>
        <fullName>Pre-uroporphyrinogen synthase</fullName>
    </alternativeName>
</protein>